<protein>
    <recommendedName>
        <fullName>Lysine-specific demethylase 2A</fullName>
        <ecNumber evidence="2">1.14.11.27</ecNumber>
    </recommendedName>
    <alternativeName>
        <fullName>F-box and leucine-rich repeat protein 11</fullName>
    </alternativeName>
    <alternativeName>
        <fullName>F-box/LRR-repeat protein 11</fullName>
    </alternativeName>
    <alternativeName>
        <fullName>JmjC domain-containing histone demethylation protein 1A</fullName>
    </alternativeName>
    <alternativeName>
        <fullName>[Histone-H3]-lysine-36 demethylase 1A</fullName>
    </alternativeName>
</protein>
<dbReference type="EC" id="1.14.11.27" evidence="2"/>
<dbReference type="EMBL" id="BC086264">
    <property type="protein sequence ID" value="AAH86264.1"/>
    <property type="molecule type" value="mRNA"/>
</dbReference>
<dbReference type="RefSeq" id="NP_001011176.1">
    <property type="nucleotide sequence ID" value="NM_001011176.1"/>
</dbReference>
<dbReference type="SMR" id="Q5U263"/>
<dbReference type="FunCoup" id="Q5U263">
    <property type="interactions" value="2926"/>
</dbReference>
<dbReference type="STRING" id="8364.ENSXETP00000002109"/>
<dbReference type="PaxDb" id="8364-ENSXETP00000034422"/>
<dbReference type="DNASU" id="496596"/>
<dbReference type="GeneID" id="496596"/>
<dbReference type="KEGG" id="xtr:496596"/>
<dbReference type="AGR" id="Xenbase:XB-GENE-5900838"/>
<dbReference type="CTD" id="22992"/>
<dbReference type="Xenbase" id="XB-GENE-5900838">
    <property type="gene designation" value="kdm2a"/>
</dbReference>
<dbReference type="eggNOG" id="KOG1633">
    <property type="taxonomic scope" value="Eukaryota"/>
</dbReference>
<dbReference type="InParanoid" id="Q5U263"/>
<dbReference type="OMA" id="XQDNRSK"/>
<dbReference type="OrthoDB" id="5876800at2759"/>
<dbReference type="Proteomes" id="UP000008143">
    <property type="component" value="Chromosome 7"/>
</dbReference>
<dbReference type="ExpressionAtlas" id="Q5U263">
    <property type="expression patterns" value="baseline"/>
</dbReference>
<dbReference type="GO" id="GO:0005654">
    <property type="term" value="C:nucleoplasm"/>
    <property type="evidence" value="ECO:0007669"/>
    <property type="project" value="UniProtKB-SubCell"/>
</dbReference>
<dbReference type="GO" id="GO:0003677">
    <property type="term" value="F:DNA binding"/>
    <property type="evidence" value="ECO:0007669"/>
    <property type="project" value="UniProtKB-KW"/>
</dbReference>
<dbReference type="GO" id="GO:0140680">
    <property type="term" value="F:histone H3K36me/H3K36me2 demethylase activity"/>
    <property type="evidence" value="ECO:0007669"/>
    <property type="project" value="UniProtKB-EC"/>
</dbReference>
<dbReference type="GO" id="GO:0008270">
    <property type="term" value="F:zinc ion binding"/>
    <property type="evidence" value="ECO:0007669"/>
    <property type="project" value="UniProtKB-KW"/>
</dbReference>
<dbReference type="GO" id="GO:0003401">
    <property type="term" value="P:axis elongation"/>
    <property type="evidence" value="ECO:0000315"/>
    <property type="project" value="Xenbase"/>
</dbReference>
<dbReference type="GO" id="GO:0001702">
    <property type="term" value="P:gastrulation with mouth forming second"/>
    <property type="evidence" value="ECO:0000315"/>
    <property type="project" value="Xenbase"/>
</dbReference>
<dbReference type="GO" id="GO:0042752">
    <property type="term" value="P:regulation of circadian rhythm"/>
    <property type="evidence" value="ECO:0000250"/>
    <property type="project" value="UniProtKB"/>
</dbReference>
<dbReference type="GO" id="GO:0048511">
    <property type="term" value="P:rhythmic process"/>
    <property type="evidence" value="ECO:0007669"/>
    <property type="project" value="UniProtKB-KW"/>
</dbReference>
<dbReference type="CDD" id="cd21784">
    <property type="entry name" value="CTD_KDM2A"/>
    <property type="match status" value="1"/>
</dbReference>
<dbReference type="CDD" id="cd22181">
    <property type="entry name" value="F-box_FBXL11"/>
    <property type="match status" value="1"/>
</dbReference>
<dbReference type="CDD" id="cd15643">
    <property type="entry name" value="PHD_KDM2A"/>
    <property type="match status" value="1"/>
</dbReference>
<dbReference type="FunFam" id="2.60.120.650:FF:000005">
    <property type="entry name" value="lysine-specific demethylase 2A isoform X1"/>
    <property type="match status" value="1"/>
</dbReference>
<dbReference type="FunFam" id="3.80.10.10:FF:000011">
    <property type="entry name" value="Lysine-specific demethylase 2B isoform X1"/>
    <property type="match status" value="1"/>
</dbReference>
<dbReference type="Gene3D" id="1.20.58.1360">
    <property type="match status" value="1"/>
</dbReference>
<dbReference type="Gene3D" id="2.60.120.650">
    <property type="entry name" value="Cupin"/>
    <property type="match status" value="1"/>
</dbReference>
<dbReference type="Gene3D" id="3.80.10.10">
    <property type="entry name" value="Ribonuclease Inhibitor"/>
    <property type="match status" value="1"/>
</dbReference>
<dbReference type="Gene3D" id="3.30.40.10">
    <property type="entry name" value="Zinc/RING finger domain, C3HC4 (zinc finger)"/>
    <property type="match status" value="1"/>
</dbReference>
<dbReference type="InterPro" id="IPR001810">
    <property type="entry name" value="F-box_dom"/>
</dbReference>
<dbReference type="InterPro" id="IPR041070">
    <property type="entry name" value="JHD"/>
</dbReference>
<dbReference type="InterPro" id="IPR050690">
    <property type="entry name" value="JHDM1_Histone_Demethylase"/>
</dbReference>
<dbReference type="InterPro" id="IPR003347">
    <property type="entry name" value="JmjC_dom"/>
</dbReference>
<dbReference type="InterPro" id="IPR006553">
    <property type="entry name" value="Leu-rich_rpt_Cys-con_subtyp"/>
</dbReference>
<dbReference type="InterPro" id="IPR032675">
    <property type="entry name" value="LRR_dom_sf"/>
</dbReference>
<dbReference type="InterPro" id="IPR019786">
    <property type="entry name" value="Zinc_finger_PHD-type_CS"/>
</dbReference>
<dbReference type="InterPro" id="IPR002857">
    <property type="entry name" value="Znf_CXXC"/>
</dbReference>
<dbReference type="InterPro" id="IPR011011">
    <property type="entry name" value="Znf_FYVE_PHD"/>
</dbReference>
<dbReference type="InterPro" id="IPR001965">
    <property type="entry name" value="Znf_PHD"/>
</dbReference>
<dbReference type="InterPro" id="IPR019787">
    <property type="entry name" value="Znf_PHD-finger"/>
</dbReference>
<dbReference type="InterPro" id="IPR013083">
    <property type="entry name" value="Znf_RING/FYVE/PHD"/>
</dbReference>
<dbReference type="PANTHER" id="PTHR23123">
    <property type="entry name" value="PHD/F-BOX CONTAINING PROTEIN"/>
    <property type="match status" value="1"/>
</dbReference>
<dbReference type="Pfam" id="PF12937">
    <property type="entry name" value="F-box-like"/>
    <property type="match status" value="1"/>
</dbReference>
<dbReference type="Pfam" id="PF17811">
    <property type="entry name" value="JHD"/>
    <property type="match status" value="1"/>
</dbReference>
<dbReference type="Pfam" id="PF02373">
    <property type="entry name" value="JmjC"/>
    <property type="match status" value="1"/>
</dbReference>
<dbReference type="Pfam" id="PF16866">
    <property type="entry name" value="PHD_4"/>
    <property type="match status" value="1"/>
</dbReference>
<dbReference type="Pfam" id="PF02008">
    <property type="entry name" value="zf-CXXC"/>
    <property type="match status" value="1"/>
</dbReference>
<dbReference type="SMART" id="SM00558">
    <property type="entry name" value="JmjC"/>
    <property type="match status" value="1"/>
</dbReference>
<dbReference type="SMART" id="SM00367">
    <property type="entry name" value="LRR_CC"/>
    <property type="match status" value="5"/>
</dbReference>
<dbReference type="SMART" id="SM00249">
    <property type="entry name" value="PHD"/>
    <property type="match status" value="1"/>
</dbReference>
<dbReference type="SUPFAM" id="SSF51197">
    <property type="entry name" value="Clavaminate synthase-like"/>
    <property type="match status" value="1"/>
</dbReference>
<dbReference type="SUPFAM" id="SSF57903">
    <property type="entry name" value="FYVE/PHD zinc finger"/>
    <property type="match status" value="1"/>
</dbReference>
<dbReference type="SUPFAM" id="SSF52047">
    <property type="entry name" value="RNI-like"/>
    <property type="match status" value="1"/>
</dbReference>
<dbReference type="PROSITE" id="PS51184">
    <property type="entry name" value="JMJC"/>
    <property type="match status" value="1"/>
</dbReference>
<dbReference type="PROSITE" id="PS51058">
    <property type="entry name" value="ZF_CXXC"/>
    <property type="match status" value="1"/>
</dbReference>
<dbReference type="PROSITE" id="PS01359">
    <property type="entry name" value="ZF_PHD_1"/>
    <property type="match status" value="1"/>
</dbReference>
<dbReference type="PROSITE" id="PS50016">
    <property type="entry name" value="ZF_PHD_2"/>
    <property type="match status" value="1"/>
</dbReference>
<proteinExistence type="evidence at transcript level"/>
<accession>Q5U263</accession>
<comment type="function">
    <text evidence="2">Histone demethylase that specifically demethylates 'Lys-36' of histone H3, thereby playing a central role in histone code. Preferentially demethylates dimethylated H3 'Lys-36' residue while it has weak or no activity for mono- and tri-methylated H3 'Lys-36'. May also recognize and bind to some phosphorylated proteins and promote their ubiquitination and degradation. Required to maintain the heterochromatic state. Associates with centromeres and represses transcription of small non-coding RNAs that are encoded by the clusters of satellite repeats at the centromere. Required to sustain centromeric integrity and genomic stability, particularly during mitosis (By similarity). May play a role in the regulation of circadian gene expression (By similarity).</text>
</comment>
<comment type="catalytic activity">
    <reaction evidence="2">
        <text>N(6),N(6)-dimethyl-L-lysyl(36)-[histone H3] + 2 2-oxoglutarate + 2 O2 = L-lysyl(36)-[histone H3] + 2 formaldehyde + 2 succinate + 2 CO2</text>
        <dbReference type="Rhea" id="RHEA:42032"/>
        <dbReference type="Rhea" id="RHEA-COMP:9785"/>
        <dbReference type="Rhea" id="RHEA-COMP:9787"/>
        <dbReference type="ChEBI" id="CHEBI:15379"/>
        <dbReference type="ChEBI" id="CHEBI:16526"/>
        <dbReference type="ChEBI" id="CHEBI:16810"/>
        <dbReference type="ChEBI" id="CHEBI:16842"/>
        <dbReference type="ChEBI" id="CHEBI:29969"/>
        <dbReference type="ChEBI" id="CHEBI:30031"/>
        <dbReference type="ChEBI" id="CHEBI:61976"/>
        <dbReference type="EC" id="1.14.11.27"/>
    </reaction>
</comment>
<comment type="cofactor">
    <cofactor evidence="2">
        <name>Fe(2+)</name>
        <dbReference type="ChEBI" id="CHEBI:29033"/>
    </cofactor>
    <text evidence="2">Binds 1 Fe(2+) ion per subunit.</text>
</comment>
<comment type="subcellular location">
    <subcellularLocation>
        <location evidence="2">Nucleus</location>
        <location evidence="2">Nucleoplasm</location>
    </subcellularLocation>
</comment>
<comment type="domain">
    <text evidence="2">The JmjC domain mediates demethylation activity and is required for satellite silencing.</text>
</comment>
<comment type="domain">
    <text evidence="2">The CXXC zinc finger preferentially recognizes nonmethylated CpG DNA, and binding is blocked when the CpG DNA is methylated.</text>
</comment>
<comment type="similarity">
    <text evidence="7">Belongs to the JHDM1 histone demethylase family.</text>
</comment>
<keyword id="KW-0090">Biological rhythms</keyword>
<keyword id="KW-0156">Chromatin regulator</keyword>
<keyword id="KW-0223">Dioxygenase</keyword>
<keyword id="KW-0238">DNA-binding</keyword>
<keyword id="KW-0408">Iron</keyword>
<keyword id="KW-0433">Leucine-rich repeat</keyword>
<keyword id="KW-0479">Metal-binding</keyword>
<keyword id="KW-0539">Nucleus</keyword>
<keyword id="KW-0560">Oxidoreductase</keyword>
<keyword id="KW-1185">Reference proteome</keyword>
<keyword id="KW-0677">Repeat</keyword>
<keyword id="KW-0678">Repressor</keyword>
<keyword id="KW-0804">Transcription</keyword>
<keyword id="KW-0805">Transcription regulation</keyword>
<keyword id="KW-0862">Zinc</keyword>
<keyword id="KW-0863">Zinc-finger</keyword>
<evidence type="ECO:0000250" key="1"/>
<evidence type="ECO:0000250" key="2">
    <source>
        <dbReference type="UniProtKB" id="Q9Y2K7"/>
    </source>
</evidence>
<evidence type="ECO:0000255" key="3">
    <source>
        <dbReference type="PROSITE-ProRule" id="PRU00146"/>
    </source>
</evidence>
<evidence type="ECO:0000255" key="4">
    <source>
        <dbReference type="PROSITE-ProRule" id="PRU00509"/>
    </source>
</evidence>
<evidence type="ECO:0000255" key="5">
    <source>
        <dbReference type="PROSITE-ProRule" id="PRU00538"/>
    </source>
</evidence>
<evidence type="ECO:0000256" key="6">
    <source>
        <dbReference type="SAM" id="MobiDB-lite"/>
    </source>
</evidence>
<evidence type="ECO:0000305" key="7"/>
<sequence>MEEEQLRYSRRLRHTLRRRYEDDGISDDEIEGKRTFDLEEKLRSSKYNSNFITYMEGKDFNMKFIQEGGLRDPIIFTKSEGLGIKMPDPNFSVNDVKMFVGSRRVVDVMDVGTQKGIEMTMAQWAKYYETPEEEREKLYNVISLEFSHTKLENLVQRPTTVDQIDWVDNIWPRHLKDRQTESTNVIQEMQYPKVQKYCLMSVRGCYTDFHVDFGGTSVWYHILRGGKVFWLIPPTDQNLELYENWLLSGKQGDVFLGDRVTECQRIELKQGYTFVIPSGWIHAVYTPQDTLVFGGNFLHSFNIPMQLRIYSIEDRTRVPTKFRYPFYYEMCWYVLERYVYCMMRRSHLTKEFQRESLSIDLELNGRQRPDTPSSSSSSSSSGLSSSSDNDDSSDQDWEEEEGLRKRERDRCRVERELQRKRNRDRQQRDQERDRHGRTERIIIHTLPASLRPLTPPPSLPLPTPDSPPSTSPFLTWFEVEGLRCLVLKLESLPPLKKCLPDGIHDPEALIFDIKRLLEDHAHDPPELALTGVPIIQWPKRSQYKVHLRPKIQFTKPHTMRPASRHSTAPPRTSGTPSGTTASSGARRRRVRCRKCQACVQRECGTCHYCKDMKKFGGPGRMKQSCVLRQCLAPRLPHSVTCALCGEVDQTNDTQDFERKLMECSVCNEIVHPGCLEMDGEGLLSDELPNYWECPKCYEGQKHTVEANHDRILLHSKRKAADNYESSHYYPAKVLRPPLGQSPPSPPLLLLPPSPSSAPPTPPSAQTQVPLASREERAKRRQLAREKENHPTGCDQSEGDRLRLRGPYLTVTLQRPPKELSSTSIVPKLQAITPNPRQPIRAAPLHQDEEREEEEEEEEEEEETENVMLGQRKDSTSMQKDVWLSVFHYLTHEELCICMRVCKAWYKWGCDKRLWSRIDVSRCKSLVPQALSGIIKRQPIYLDLSWTNVSKKQLIWLINRLPGLKDLILAGCTWSAVSALASCSCPLLRTLDLRWTVGIKDTQIRDLLTPASDKSGHDSRSKLRLLTDLRLSGLDISDVTLRLIIRHCPLLSKLDLSHCPLLSDQSVNLLTAVGSSTRGTLTHIHLAGCKGVTDESLLYLRRATNLSLIDLHGCKQVTRGACEEFISDLSVSTLYCLSDDKLIQRIS</sequence>
<organism>
    <name type="scientific">Xenopus tropicalis</name>
    <name type="common">Western clawed frog</name>
    <name type="synonym">Silurana tropicalis</name>
    <dbReference type="NCBI Taxonomy" id="8364"/>
    <lineage>
        <taxon>Eukaryota</taxon>
        <taxon>Metazoa</taxon>
        <taxon>Chordata</taxon>
        <taxon>Craniata</taxon>
        <taxon>Vertebrata</taxon>
        <taxon>Euteleostomi</taxon>
        <taxon>Amphibia</taxon>
        <taxon>Batrachia</taxon>
        <taxon>Anura</taxon>
        <taxon>Pipoidea</taxon>
        <taxon>Pipidae</taxon>
        <taxon>Xenopodinae</taxon>
        <taxon>Xenopus</taxon>
        <taxon>Silurana</taxon>
    </lineage>
</organism>
<reference key="1">
    <citation type="submission" date="2004-11" db="EMBL/GenBank/DDBJ databases">
        <authorList>
            <consortium name="NIH - Xenopus Gene Collection (XGC) project"/>
        </authorList>
    </citation>
    <scope>NUCLEOTIDE SEQUENCE [LARGE SCALE MRNA]</scope>
    <source>
        <tissue>Embryo</tissue>
    </source>
</reference>
<name>KDM2A_XENTR</name>
<feature type="chain" id="PRO_0000226787" description="Lysine-specific demethylase 2A">
    <location>
        <begin position="1"/>
        <end position="1146"/>
    </location>
</feature>
<feature type="domain" description="JmjC" evidence="5">
    <location>
        <begin position="146"/>
        <end position="314"/>
    </location>
</feature>
<feature type="domain" description="F-box">
    <location>
        <begin position="874"/>
        <end position="919"/>
    </location>
</feature>
<feature type="repeat" description="LRR 1">
    <location>
        <begin position="945"/>
        <end position="966"/>
    </location>
</feature>
<feature type="repeat" description="LRR 2">
    <location>
        <begin position="968"/>
        <end position="994"/>
    </location>
</feature>
<feature type="repeat" description="LRR 3">
    <location>
        <begin position="1032"/>
        <end position="1057"/>
    </location>
</feature>
<feature type="repeat" description="LRR 4">
    <location>
        <begin position="1058"/>
        <end position="1087"/>
    </location>
</feature>
<feature type="repeat" description="LRR 5">
    <location>
        <begin position="1088"/>
        <end position="1112"/>
    </location>
</feature>
<feature type="repeat" description="LRR 6">
    <location>
        <begin position="1113"/>
        <end position="1138"/>
    </location>
</feature>
<feature type="zinc finger region" description="CXXC-type" evidence="4">
    <location>
        <begin position="585"/>
        <end position="631"/>
    </location>
</feature>
<feature type="zinc finger region" description="PHD-type" evidence="3">
    <location>
        <begin position="638"/>
        <end position="699"/>
    </location>
</feature>
<feature type="region of interest" description="Disordered" evidence="6">
    <location>
        <begin position="363"/>
        <end position="467"/>
    </location>
</feature>
<feature type="region of interest" description="Disordered" evidence="6">
    <location>
        <begin position="554"/>
        <end position="585"/>
    </location>
</feature>
<feature type="region of interest" description="Disordered" evidence="6">
    <location>
        <begin position="733"/>
        <end position="800"/>
    </location>
</feature>
<feature type="region of interest" description="Disordered" evidence="6">
    <location>
        <begin position="832"/>
        <end position="867"/>
    </location>
</feature>
<feature type="compositionally biased region" description="Low complexity" evidence="6">
    <location>
        <begin position="373"/>
        <end position="387"/>
    </location>
</feature>
<feature type="compositionally biased region" description="Acidic residues" evidence="6">
    <location>
        <begin position="388"/>
        <end position="401"/>
    </location>
</feature>
<feature type="compositionally biased region" description="Basic and acidic residues" evidence="6">
    <location>
        <begin position="402"/>
        <end position="442"/>
    </location>
</feature>
<feature type="compositionally biased region" description="Pro residues" evidence="6">
    <location>
        <begin position="453"/>
        <end position="467"/>
    </location>
</feature>
<feature type="compositionally biased region" description="Low complexity" evidence="6">
    <location>
        <begin position="566"/>
        <end position="584"/>
    </location>
</feature>
<feature type="compositionally biased region" description="Pro residues" evidence="6">
    <location>
        <begin position="739"/>
        <end position="762"/>
    </location>
</feature>
<feature type="compositionally biased region" description="Basic and acidic residues" evidence="6">
    <location>
        <begin position="772"/>
        <end position="789"/>
    </location>
</feature>
<feature type="compositionally biased region" description="Acidic residues" evidence="6">
    <location>
        <begin position="849"/>
        <end position="864"/>
    </location>
</feature>
<feature type="binding site" evidence="1">
    <location>
        <position position="207"/>
    </location>
    <ligand>
        <name>substrate</name>
    </ligand>
</feature>
<feature type="binding site" evidence="5">
    <location>
        <position position="210"/>
    </location>
    <ligand>
        <name>Fe cation</name>
        <dbReference type="ChEBI" id="CHEBI:24875"/>
        <note>catalytic</note>
    </ligand>
</feature>
<feature type="binding site" evidence="5">
    <location>
        <position position="212"/>
    </location>
    <ligand>
        <name>Fe cation</name>
        <dbReference type="ChEBI" id="CHEBI:24875"/>
        <note>catalytic</note>
    </ligand>
</feature>
<feature type="binding site" evidence="1">
    <location>
        <position position="227"/>
    </location>
    <ligand>
        <name>substrate</name>
    </ligand>
</feature>
<feature type="binding site" evidence="5">
    <location>
        <position position="282"/>
    </location>
    <ligand>
        <name>Fe cation</name>
        <dbReference type="ChEBI" id="CHEBI:24875"/>
        <note>catalytic</note>
    </ligand>
</feature>
<feature type="binding site" evidence="4">
    <location>
        <position position="592"/>
    </location>
    <ligand>
        <name>Zn(2+)</name>
        <dbReference type="ChEBI" id="CHEBI:29105"/>
        <label>1</label>
    </ligand>
</feature>
<feature type="binding site" evidence="4">
    <location>
        <position position="595"/>
    </location>
    <ligand>
        <name>Zn(2+)</name>
        <dbReference type="ChEBI" id="CHEBI:29105"/>
        <label>1</label>
    </ligand>
</feature>
<feature type="binding site" evidence="4">
    <location>
        <position position="598"/>
    </location>
    <ligand>
        <name>Zn(2+)</name>
        <dbReference type="ChEBI" id="CHEBI:29105"/>
        <label>1</label>
    </ligand>
</feature>
<feature type="binding site" evidence="4">
    <location>
        <position position="603"/>
    </location>
    <ligand>
        <name>Zn(2+)</name>
        <dbReference type="ChEBI" id="CHEBI:29105"/>
        <label>2</label>
    </ligand>
</feature>
<feature type="binding site" evidence="4">
    <location>
        <position position="606"/>
    </location>
    <ligand>
        <name>Zn(2+)</name>
        <dbReference type="ChEBI" id="CHEBI:29105"/>
        <label>2</label>
    </ligand>
</feature>
<feature type="binding site" evidence="4">
    <location>
        <position position="609"/>
    </location>
    <ligand>
        <name>Zn(2+)</name>
        <dbReference type="ChEBI" id="CHEBI:29105"/>
        <label>2</label>
    </ligand>
</feature>
<feature type="binding site" evidence="4">
    <location>
        <position position="625"/>
    </location>
    <ligand>
        <name>Zn(2+)</name>
        <dbReference type="ChEBI" id="CHEBI:29105"/>
        <label>2</label>
    </ligand>
</feature>
<feature type="binding site" evidence="4">
    <location>
        <position position="630"/>
    </location>
    <ligand>
        <name>Zn(2+)</name>
        <dbReference type="ChEBI" id="CHEBI:29105"/>
        <label>1</label>
    </ligand>
</feature>
<gene>
    <name type="primary">kdm2a</name>
    <name type="synonym">fbxl11</name>
    <name type="synonym">jhdm1a</name>
</gene>